<proteinExistence type="inferred from homology"/>
<keyword id="KW-0963">Cytoplasm</keyword>
<keyword id="KW-0255">Endonuclease</keyword>
<keyword id="KW-0378">Hydrolase</keyword>
<keyword id="KW-0460">Magnesium</keyword>
<keyword id="KW-0479">Metal-binding</keyword>
<keyword id="KW-0540">Nuclease</keyword>
<name>RNH_ACISJ</name>
<evidence type="ECO:0000255" key="1">
    <source>
        <dbReference type="HAMAP-Rule" id="MF_00042"/>
    </source>
</evidence>
<evidence type="ECO:0000255" key="2">
    <source>
        <dbReference type="PROSITE-ProRule" id="PRU00408"/>
    </source>
</evidence>
<gene>
    <name evidence="1" type="primary">rnhA</name>
    <name type="ordered locus">Ajs_1745</name>
</gene>
<protein>
    <recommendedName>
        <fullName evidence="1">Ribonuclease H</fullName>
        <shortName evidence="1">RNase H</shortName>
        <ecNumber evidence="1">3.1.26.4</ecNumber>
    </recommendedName>
</protein>
<accession>A1W6Q8</accession>
<feature type="chain" id="PRO_0000332553" description="Ribonuclease H">
    <location>
        <begin position="1"/>
        <end position="148"/>
    </location>
</feature>
<feature type="domain" description="RNase H type-1" evidence="2">
    <location>
        <begin position="1"/>
        <end position="143"/>
    </location>
</feature>
<feature type="binding site" evidence="1">
    <location>
        <position position="9"/>
    </location>
    <ligand>
        <name>Mg(2+)</name>
        <dbReference type="ChEBI" id="CHEBI:18420"/>
        <label>1</label>
    </ligand>
</feature>
<feature type="binding site" evidence="1">
    <location>
        <position position="9"/>
    </location>
    <ligand>
        <name>Mg(2+)</name>
        <dbReference type="ChEBI" id="CHEBI:18420"/>
        <label>2</label>
    </ligand>
</feature>
<feature type="binding site" evidence="1">
    <location>
        <position position="47"/>
    </location>
    <ligand>
        <name>Mg(2+)</name>
        <dbReference type="ChEBI" id="CHEBI:18420"/>
        <label>1</label>
    </ligand>
</feature>
<feature type="binding site" evidence="1">
    <location>
        <position position="69"/>
    </location>
    <ligand>
        <name>Mg(2+)</name>
        <dbReference type="ChEBI" id="CHEBI:18420"/>
        <label>1</label>
    </ligand>
</feature>
<feature type="binding site" evidence="1">
    <location>
        <position position="135"/>
    </location>
    <ligand>
        <name>Mg(2+)</name>
        <dbReference type="ChEBI" id="CHEBI:18420"/>
        <label>2</label>
    </ligand>
</feature>
<sequence>MNQVVIYTDGACKGNPGPGGWGAVLRSGTLEKELFGGELGTTNNRMELMAVIQALGALKRPCQVALYLDSQYVRQGITEWIHGWKKKGWRTAAGQPVKNVELWQRLDELAHQAGHRIEWHWVRGHAGDPGNERADMLANKGVEQVLGR</sequence>
<reference key="1">
    <citation type="submission" date="2006-12" db="EMBL/GenBank/DDBJ databases">
        <title>Complete sequence of chromosome 1 of Acidovorax sp. JS42.</title>
        <authorList>
            <person name="Copeland A."/>
            <person name="Lucas S."/>
            <person name="Lapidus A."/>
            <person name="Barry K."/>
            <person name="Detter J.C."/>
            <person name="Glavina del Rio T."/>
            <person name="Dalin E."/>
            <person name="Tice H."/>
            <person name="Pitluck S."/>
            <person name="Chertkov O."/>
            <person name="Brettin T."/>
            <person name="Bruce D."/>
            <person name="Han C."/>
            <person name="Tapia R."/>
            <person name="Gilna P."/>
            <person name="Schmutz J."/>
            <person name="Larimer F."/>
            <person name="Land M."/>
            <person name="Hauser L."/>
            <person name="Kyrpides N."/>
            <person name="Kim E."/>
            <person name="Stahl D."/>
            <person name="Richardson P."/>
        </authorList>
    </citation>
    <scope>NUCLEOTIDE SEQUENCE [LARGE SCALE GENOMIC DNA]</scope>
    <source>
        <strain>JS42</strain>
    </source>
</reference>
<dbReference type="EC" id="3.1.26.4" evidence="1"/>
<dbReference type="EMBL" id="CP000539">
    <property type="protein sequence ID" value="ABM41933.1"/>
    <property type="molecule type" value="Genomic_DNA"/>
</dbReference>
<dbReference type="SMR" id="A1W6Q8"/>
<dbReference type="STRING" id="232721.Ajs_1745"/>
<dbReference type="KEGG" id="ajs:Ajs_1745"/>
<dbReference type="eggNOG" id="COG0328">
    <property type="taxonomic scope" value="Bacteria"/>
</dbReference>
<dbReference type="HOGENOM" id="CLU_030894_6_0_4"/>
<dbReference type="Proteomes" id="UP000000645">
    <property type="component" value="Chromosome"/>
</dbReference>
<dbReference type="GO" id="GO:0005737">
    <property type="term" value="C:cytoplasm"/>
    <property type="evidence" value="ECO:0007669"/>
    <property type="project" value="UniProtKB-SubCell"/>
</dbReference>
<dbReference type="GO" id="GO:0000287">
    <property type="term" value="F:magnesium ion binding"/>
    <property type="evidence" value="ECO:0007669"/>
    <property type="project" value="UniProtKB-UniRule"/>
</dbReference>
<dbReference type="GO" id="GO:0003676">
    <property type="term" value="F:nucleic acid binding"/>
    <property type="evidence" value="ECO:0007669"/>
    <property type="project" value="InterPro"/>
</dbReference>
<dbReference type="GO" id="GO:0004523">
    <property type="term" value="F:RNA-DNA hybrid ribonuclease activity"/>
    <property type="evidence" value="ECO:0007669"/>
    <property type="project" value="UniProtKB-UniRule"/>
</dbReference>
<dbReference type="GO" id="GO:0043137">
    <property type="term" value="P:DNA replication, removal of RNA primer"/>
    <property type="evidence" value="ECO:0007669"/>
    <property type="project" value="TreeGrafter"/>
</dbReference>
<dbReference type="CDD" id="cd09278">
    <property type="entry name" value="RNase_HI_prokaryote_like"/>
    <property type="match status" value="1"/>
</dbReference>
<dbReference type="FunFam" id="3.30.420.10:FF:000089">
    <property type="entry name" value="Ribonuclease H"/>
    <property type="match status" value="1"/>
</dbReference>
<dbReference type="Gene3D" id="3.30.420.10">
    <property type="entry name" value="Ribonuclease H-like superfamily/Ribonuclease H"/>
    <property type="match status" value="1"/>
</dbReference>
<dbReference type="HAMAP" id="MF_00042">
    <property type="entry name" value="RNase_H"/>
    <property type="match status" value="1"/>
</dbReference>
<dbReference type="InterPro" id="IPR050092">
    <property type="entry name" value="RNase_H"/>
</dbReference>
<dbReference type="InterPro" id="IPR012337">
    <property type="entry name" value="RNaseH-like_sf"/>
</dbReference>
<dbReference type="InterPro" id="IPR002156">
    <property type="entry name" value="RNaseH_domain"/>
</dbReference>
<dbReference type="InterPro" id="IPR036397">
    <property type="entry name" value="RNaseH_sf"/>
</dbReference>
<dbReference type="InterPro" id="IPR022892">
    <property type="entry name" value="RNaseHI"/>
</dbReference>
<dbReference type="NCBIfam" id="NF001236">
    <property type="entry name" value="PRK00203.1"/>
    <property type="match status" value="1"/>
</dbReference>
<dbReference type="PANTHER" id="PTHR10642">
    <property type="entry name" value="RIBONUCLEASE H1"/>
    <property type="match status" value="1"/>
</dbReference>
<dbReference type="PANTHER" id="PTHR10642:SF26">
    <property type="entry name" value="RIBONUCLEASE H1"/>
    <property type="match status" value="1"/>
</dbReference>
<dbReference type="Pfam" id="PF00075">
    <property type="entry name" value="RNase_H"/>
    <property type="match status" value="1"/>
</dbReference>
<dbReference type="SUPFAM" id="SSF53098">
    <property type="entry name" value="Ribonuclease H-like"/>
    <property type="match status" value="1"/>
</dbReference>
<dbReference type="PROSITE" id="PS50879">
    <property type="entry name" value="RNASE_H_1"/>
    <property type="match status" value="1"/>
</dbReference>
<comment type="function">
    <text evidence="1">Endonuclease that specifically degrades the RNA of RNA-DNA hybrids.</text>
</comment>
<comment type="catalytic activity">
    <reaction evidence="1">
        <text>Endonucleolytic cleavage to 5'-phosphomonoester.</text>
        <dbReference type="EC" id="3.1.26.4"/>
    </reaction>
</comment>
<comment type="cofactor">
    <cofactor evidence="1">
        <name>Mg(2+)</name>
        <dbReference type="ChEBI" id="CHEBI:18420"/>
    </cofactor>
    <text evidence="1">Binds 1 Mg(2+) ion per subunit. May bind a second metal ion at a regulatory site, or after substrate binding.</text>
</comment>
<comment type="subunit">
    <text evidence="1">Monomer.</text>
</comment>
<comment type="subcellular location">
    <subcellularLocation>
        <location evidence="1">Cytoplasm</location>
    </subcellularLocation>
</comment>
<comment type="similarity">
    <text evidence="1">Belongs to the RNase H family.</text>
</comment>
<organism>
    <name type="scientific">Acidovorax sp. (strain JS42)</name>
    <dbReference type="NCBI Taxonomy" id="232721"/>
    <lineage>
        <taxon>Bacteria</taxon>
        <taxon>Pseudomonadati</taxon>
        <taxon>Pseudomonadota</taxon>
        <taxon>Betaproteobacteria</taxon>
        <taxon>Burkholderiales</taxon>
        <taxon>Comamonadaceae</taxon>
        <taxon>Acidovorax</taxon>
    </lineage>
</organism>